<sequence>MAGMQESADVLKCSFCGKSQKQVRKLIAGPGVYICDECIDLCNEIIEEEFDNSPAQKTDKALPKPSQIVDFLGDYVIGQDAAKRTLAVAVYNHYKRIQADENDHHKSDDDIEIAKSNILMLGPTGSGKTYLAQTLARMLDVPFAMTDATSLTEAGYVGEDVENILLKLLQAADFDVDRAQRGIIYIDEVDKISRKSENPSITRDVSGEGVQQALLKILEGTVASVPPQGGRKHPNQEFIQLDTKNVLFIVAGAFAGLEKVIGERRGKQGLGFGANVSSKEENELDAFSYVQPEDLVKFGLIPEFIGRLPVVATVNDLDREALVRVLTEPKNSLVKQYSRLLDMDGVTLTMEEGALNAIADKAIERGTGARGLRAILEEILGPVMFEVPDSEDVTEVVISEECVTEGAEPRLISSTEAERESA</sequence>
<reference key="1">
    <citation type="journal article" date="2008" name="J. Biotechnol.">
        <title>Ultrafast pyrosequencing of Corynebacterium kroppenstedtii DSM44385 revealed insights into the physiology of a lipophilic corynebacterium that lacks mycolic acids.</title>
        <authorList>
            <person name="Tauch A."/>
            <person name="Schneider J."/>
            <person name="Szczepanowski R."/>
            <person name="Tilker A."/>
            <person name="Viehoever P."/>
            <person name="Gartemann K.-H."/>
            <person name="Arnold W."/>
            <person name="Blom J."/>
            <person name="Brinkrolf K."/>
            <person name="Brune I."/>
            <person name="Goetker S."/>
            <person name="Weisshaar B."/>
            <person name="Goesmann A."/>
            <person name="Droege M."/>
            <person name="Puehler A."/>
        </authorList>
    </citation>
    <scope>NUCLEOTIDE SEQUENCE [LARGE SCALE GENOMIC DNA]</scope>
    <source>
        <strain>DSM 44385 / JCM 11950 / CIP 105744 / CCUG 35717</strain>
    </source>
</reference>
<comment type="function">
    <text evidence="1">ATP-dependent specificity component of the Clp protease. It directs the protease to specific substrates. Can perform chaperone functions in the absence of ClpP.</text>
</comment>
<comment type="subunit">
    <text evidence="1">Component of the ClpX-ClpP complex. Forms a hexameric ring that, in the presence of ATP, binds to fourteen ClpP subunits assembled into a disk-like structure with a central cavity, resembling the structure of eukaryotic proteasomes.</text>
</comment>
<comment type="similarity">
    <text evidence="1">Belongs to the ClpX chaperone family.</text>
</comment>
<protein>
    <recommendedName>
        <fullName evidence="1">ATP-dependent Clp protease ATP-binding subunit ClpX</fullName>
    </recommendedName>
</protein>
<accession>C4LJV6</accession>
<dbReference type="EMBL" id="CP001620">
    <property type="protein sequence ID" value="ACR18111.1"/>
    <property type="molecule type" value="Genomic_DNA"/>
</dbReference>
<dbReference type="RefSeq" id="WP_012731998.1">
    <property type="nucleotide sequence ID" value="NC_012704.1"/>
</dbReference>
<dbReference type="SMR" id="C4LJV6"/>
<dbReference type="STRING" id="645127.ckrop_1370"/>
<dbReference type="KEGG" id="ckp:ckrop_1370"/>
<dbReference type="eggNOG" id="COG1219">
    <property type="taxonomic scope" value="Bacteria"/>
</dbReference>
<dbReference type="HOGENOM" id="CLU_014218_8_2_11"/>
<dbReference type="OrthoDB" id="9804062at2"/>
<dbReference type="Proteomes" id="UP000001473">
    <property type="component" value="Chromosome"/>
</dbReference>
<dbReference type="GO" id="GO:0009376">
    <property type="term" value="C:HslUV protease complex"/>
    <property type="evidence" value="ECO:0007669"/>
    <property type="project" value="TreeGrafter"/>
</dbReference>
<dbReference type="GO" id="GO:0005524">
    <property type="term" value="F:ATP binding"/>
    <property type="evidence" value="ECO:0007669"/>
    <property type="project" value="UniProtKB-UniRule"/>
</dbReference>
<dbReference type="GO" id="GO:0016887">
    <property type="term" value="F:ATP hydrolysis activity"/>
    <property type="evidence" value="ECO:0007669"/>
    <property type="project" value="InterPro"/>
</dbReference>
<dbReference type="GO" id="GO:0140662">
    <property type="term" value="F:ATP-dependent protein folding chaperone"/>
    <property type="evidence" value="ECO:0007669"/>
    <property type="project" value="InterPro"/>
</dbReference>
<dbReference type="GO" id="GO:0046983">
    <property type="term" value="F:protein dimerization activity"/>
    <property type="evidence" value="ECO:0007669"/>
    <property type="project" value="InterPro"/>
</dbReference>
<dbReference type="GO" id="GO:0051082">
    <property type="term" value="F:unfolded protein binding"/>
    <property type="evidence" value="ECO:0007669"/>
    <property type="project" value="UniProtKB-UniRule"/>
</dbReference>
<dbReference type="GO" id="GO:0008270">
    <property type="term" value="F:zinc ion binding"/>
    <property type="evidence" value="ECO:0007669"/>
    <property type="project" value="InterPro"/>
</dbReference>
<dbReference type="GO" id="GO:0051301">
    <property type="term" value="P:cell division"/>
    <property type="evidence" value="ECO:0007669"/>
    <property type="project" value="TreeGrafter"/>
</dbReference>
<dbReference type="GO" id="GO:0051603">
    <property type="term" value="P:proteolysis involved in protein catabolic process"/>
    <property type="evidence" value="ECO:0007669"/>
    <property type="project" value="TreeGrafter"/>
</dbReference>
<dbReference type="CDD" id="cd19497">
    <property type="entry name" value="RecA-like_ClpX"/>
    <property type="match status" value="1"/>
</dbReference>
<dbReference type="FunFam" id="1.10.8.60:FF:000002">
    <property type="entry name" value="ATP-dependent Clp protease ATP-binding subunit ClpX"/>
    <property type="match status" value="1"/>
</dbReference>
<dbReference type="FunFam" id="3.40.50.300:FF:000005">
    <property type="entry name" value="ATP-dependent Clp protease ATP-binding subunit ClpX"/>
    <property type="match status" value="1"/>
</dbReference>
<dbReference type="Gene3D" id="1.10.8.60">
    <property type="match status" value="1"/>
</dbReference>
<dbReference type="Gene3D" id="6.20.220.10">
    <property type="entry name" value="ClpX chaperone, C4-type zinc finger domain"/>
    <property type="match status" value="1"/>
</dbReference>
<dbReference type="Gene3D" id="3.40.50.300">
    <property type="entry name" value="P-loop containing nucleotide triphosphate hydrolases"/>
    <property type="match status" value="1"/>
</dbReference>
<dbReference type="HAMAP" id="MF_00175">
    <property type="entry name" value="ClpX"/>
    <property type="match status" value="1"/>
</dbReference>
<dbReference type="InterPro" id="IPR003593">
    <property type="entry name" value="AAA+_ATPase"/>
</dbReference>
<dbReference type="InterPro" id="IPR050052">
    <property type="entry name" value="ATP-dep_Clp_protease_ClpX"/>
</dbReference>
<dbReference type="InterPro" id="IPR003959">
    <property type="entry name" value="ATPase_AAA_core"/>
</dbReference>
<dbReference type="InterPro" id="IPR019489">
    <property type="entry name" value="Clp_ATPase_C"/>
</dbReference>
<dbReference type="InterPro" id="IPR004487">
    <property type="entry name" value="Clp_protease_ATP-bd_su_ClpX"/>
</dbReference>
<dbReference type="InterPro" id="IPR046425">
    <property type="entry name" value="ClpX_bact"/>
</dbReference>
<dbReference type="InterPro" id="IPR027417">
    <property type="entry name" value="P-loop_NTPase"/>
</dbReference>
<dbReference type="InterPro" id="IPR010603">
    <property type="entry name" value="Znf_CppX_C4"/>
</dbReference>
<dbReference type="InterPro" id="IPR038366">
    <property type="entry name" value="Znf_CppX_C4_sf"/>
</dbReference>
<dbReference type="NCBIfam" id="TIGR00382">
    <property type="entry name" value="clpX"/>
    <property type="match status" value="1"/>
</dbReference>
<dbReference type="NCBIfam" id="NF003745">
    <property type="entry name" value="PRK05342.1"/>
    <property type="match status" value="1"/>
</dbReference>
<dbReference type="PANTHER" id="PTHR48102:SF7">
    <property type="entry name" value="ATP-DEPENDENT CLP PROTEASE ATP-BINDING SUBUNIT CLPX-LIKE, MITOCHONDRIAL"/>
    <property type="match status" value="1"/>
</dbReference>
<dbReference type="PANTHER" id="PTHR48102">
    <property type="entry name" value="ATP-DEPENDENT CLP PROTEASE ATP-BINDING SUBUNIT CLPX-LIKE, MITOCHONDRIAL-RELATED"/>
    <property type="match status" value="1"/>
</dbReference>
<dbReference type="Pfam" id="PF07724">
    <property type="entry name" value="AAA_2"/>
    <property type="match status" value="1"/>
</dbReference>
<dbReference type="Pfam" id="PF10431">
    <property type="entry name" value="ClpB_D2-small"/>
    <property type="match status" value="1"/>
</dbReference>
<dbReference type="Pfam" id="PF06689">
    <property type="entry name" value="zf-C4_ClpX"/>
    <property type="match status" value="1"/>
</dbReference>
<dbReference type="SMART" id="SM00382">
    <property type="entry name" value="AAA"/>
    <property type="match status" value="1"/>
</dbReference>
<dbReference type="SMART" id="SM01086">
    <property type="entry name" value="ClpB_D2-small"/>
    <property type="match status" value="1"/>
</dbReference>
<dbReference type="SMART" id="SM00994">
    <property type="entry name" value="zf-C4_ClpX"/>
    <property type="match status" value="1"/>
</dbReference>
<dbReference type="SUPFAM" id="SSF57716">
    <property type="entry name" value="Glucocorticoid receptor-like (DNA-binding domain)"/>
    <property type="match status" value="1"/>
</dbReference>
<dbReference type="SUPFAM" id="SSF52540">
    <property type="entry name" value="P-loop containing nucleoside triphosphate hydrolases"/>
    <property type="match status" value="1"/>
</dbReference>
<dbReference type="PROSITE" id="PS51902">
    <property type="entry name" value="CLPX_ZB"/>
    <property type="match status" value="1"/>
</dbReference>
<organism>
    <name type="scientific">Corynebacterium kroppenstedtii (strain DSM 44385 / JCM 11950 / CIP 105744 / CCUG 35717)</name>
    <dbReference type="NCBI Taxonomy" id="645127"/>
    <lineage>
        <taxon>Bacteria</taxon>
        <taxon>Bacillati</taxon>
        <taxon>Actinomycetota</taxon>
        <taxon>Actinomycetes</taxon>
        <taxon>Mycobacteriales</taxon>
        <taxon>Corynebacteriaceae</taxon>
        <taxon>Corynebacterium</taxon>
    </lineage>
</organism>
<keyword id="KW-0067">ATP-binding</keyword>
<keyword id="KW-0143">Chaperone</keyword>
<keyword id="KW-0479">Metal-binding</keyword>
<keyword id="KW-0547">Nucleotide-binding</keyword>
<keyword id="KW-1185">Reference proteome</keyword>
<keyword id="KW-0862">Zinc</keyword>
<evidence type="ECO:0000255" key="1">
    <source>
        <dbReference type="HAMAP-Rule" id="MF_00175"/>
    </source>
</evidence>
<evidence type="ECO:0000255" key="2">
    <source>
        <dbReference type="PROSITE-ProRule" id="PRU01250"/>
    </source>
</evidence>
<proteinExistence type="inferred from homology"/>
<gene>
    <name evidence="1" type="primary">clpX</name>
    <name type="ordered locus">ckrop_1370</name>
</gene>
<feature type="chain" id="PRO_1000203728" description="ATP-dependent Clp protease ATP-binding subunit ClpX">
    <location>
        <begin position="1"/>
        <end position="422"/>
    </location>
</feature>
<feature type="domain" description="ClpX-type ZB" evidence="2">
    <location>
        <begin position="1"/>
        <end position="54"/>
    </location>
</feature>
<feature type="binding site" evidence="2">
    <location>
        <position position="13"/>
    </location>
    <ligand>
        <name>Zn(2+)</name>
        <dbReference type="ChEBI" id="CHEBI:29105"/>
    </ligand>
</feature>
<feature type="binding site" evidence="2">
    <location>
        <position position="16"/>
    </location>
    <ligand>
        <name>Zn(2+)</name>
        <dbReference type="ChEBI" id="CHEBI:29105"/>
    </ligand>
</feature>
<feature type="binding site" evidence="2">
    <location>
        <position position="35"/>
    </location>
    <ligand>
        <name>Zn(2+)</name>
        <dbReference type="ChEBI" id="CHEBI:29105"/>
    </ligand>
</feature>
<feature type="binding site" evidence="2">
    <location>
        <position position="38"/>
    </location>
    <ligand>
        <name>Zn(2+)</name>
        <dbReference type="ChEBI" id="CHEBI:29105"/>
    </ligand>
</feature>
<feature type="binding site" evidence="1">
    <location>
        <begin position="123"/>
        <end position="130"/>
    </location>
    <ligand>
        <name>ATP</name>
        <dbReference type="ChEBI" id="CHEBI:30616"/>
    </ligand>
</feature>
<name>CLPX_CORK4</name>